<proteinExistence type="inferred from homology"/>
<comment type="function">
    <text evidence="1">This is one of the proteins that bind and probably mediate the attachment of the 5S RNA into the large ribosomal subunit, where it forms part of the central protuberance.</text>
</comment>
<comment type="subunit">
    <text evidence="1">Part of the 50S ribosomal subunit; part of the 5S rRNA/L5/L18/L25 subcomplex. Contacts the 5S and 23S rRNAs.</text>
</comment>
<comment type="similarity">
    <text evidence="1">Belongs to the universal ribosomal protein uL18 family.</text>
</comment>
<reference key="1">
    <citation type="journal article" date="2006" name="J. Bacteriol.">
        <title>Pathogenomic sequence analysis of Bacillus cereus and Bacillus thuringiensis isolates closely related to Bacillus anthracis.</title>
        <authorList>
            <person name="Han C.S."/>
            <person name="Xie G."/>
            <person name="Challacombe J.F."/>
            <person name="Altherr M.R."/>
            <person name="Bhotika S.S."/>
            <person name="Bruce D."/>
            <person name="Campbell C.S."/>
            <person name="Campbell M.L."/>
            <person name="Chen J."/>
            <person name="Chertkov O."/>
            <person name="Cleland C."/>
            <person name="Dimitrijevic M."/>
            <person name="Doggett N.A."/>
            <person name="Fawcett J.J."/>
            <person name="Glavina T."/>
            <person name="Goodwin L.A."/>
            <person name="Hill K.K."/>
            <person name="Hitchcock P."/>
            <person name="Jackson P.J."/>
            <person name="Keim P."/>
            <person name="Kewalramani A.R."/>
            <person name="Longmire J."/>
            <person name="Lucas S."/>
            <person name="Malfatti S."/>
            <person name="McMurry K."/>
            <person name="Meincke L.J."/>
            <person name="Misra M."/>
            <person name="Moseman B.L."/>
            <person name="Mundt M."/>
            <person name="Munk A.C."/>
            <person name="Okinaka R.T."/>
            <person name="Parson-Quintana B."/>
            <person name="Reilly L.P."/>
            <person name="Richardson P."/>
            <person name="Robinson D.L."/>
            <person name="Rubin E."/>
            <person name="Saunders E."/>
            <person name="Tapia R."/>
            <person name="Tesmer J.G."/>
            <person name="Thayer N."/>
            <person name="Thompson L.S."/>
            <person name="Tice H."/>
            <person name="Ticknor L.O."/>
            <person name="Wills P.L."/>
            <person name="Brettin T.S."/>
            <person name="Gilna P."/>
        </authorList>
    </citation>
    <scope>NUCLEOTIDE SEQUENCE [LARGE SCALE GENOMIC DNA]</scope>
    <source>
        <strain>ZK / E33L</strain>
    </source>
</reference>
<sequence length="120" mass="13106">MITKADKNATRKKRHARVRAKLTGTAERPRLNVFRSNQHIYAQVIDDVNGVTLVSASTLDKDLALNGTSNIEAATKVGESVAKRAVEKGVKEVVFDRGGYLYHGRVKALAEAAREAGLQF</sequence>
<feature type="chain" id="PRO_0000131208" description="Large ribosomal subunit protein uL18">
    <location>
        <begin position="1"/>
        <end position="120"/>
    </location>
</feature>
<dbReference type="EMBL" id="CP000001">
    <property type="protein sequence ID" value="AAU20111.1"/>
    <property type="molecule type" value="Genomic_DNA"/>
</dbReference>
<dbReference type="RefSeq" id="WP_000628816.1">
    <property type="nucleotide sequence ID" value="NZ_CP009968.1"/>
</dbReference>
<dbReference type="SMR" id="Q63H74"/>
<dbReference type="GeneID" id="93010927"/>
<dbReference type="KEGG" id="bcz:BCE33L0120"/>
<dbReference type="PATRIC" id="fig|288681.22.peg.31"/>
<dbReference type="Proteomes" id="UP000002612">
    <property type="component" value="Chromosome"/>
</dbReference>
<dbReference type="GO" id="GO:0022625">
    <property type="term" value="C:cytosolic large ribosomal subunit"/>
    <property type="evidence" value="ECO:0007669"/>
    <property type="project" value="TreeGrafter"/>
</dbReference>
<dbReference type="GO" id="GO:0008097">
    <property type="term" value="F:5S rRNA binding"/>
    <property type="evidence" value="ECO:0007669"/>
    <property type="project" value="TreeGrafter"/>
</dbReference>
<dbReference type="GO" id="GO:0003735">
    <property type="term" value="F:structural constituent of ribosome"/>
    <property type="evidence" value="ECO:0007669"/>
    <property type="project" value="InterPro"/>
</dbReference>
<dbReference type="GO" id="GO:0006412">
    <property type="term" value="P:translation"/>
    <property type="evidence" value="ECO:0007669"/>
    <property type="project" value="UniProtKB-UniRule"/>
</dbReference>
<dbReference type="CDD" id="cd00432">
    <property type="entry name" value="Ribosomal_L18_L5e"/>
    <property type="match status" value="1"/>
</dbReference>
<dbReference type="FunFam" id="3.30.420.100:FF:000001">
    <property type="entry name" value="50S ribosomal protein L18"/>
    <property type="match status" value="1"/>
</dbReference>
<dbReference type="Gene3D" id="3.30.420.100">
    <property type="match status" value="1"/>
</dbReference>
<dbReference type="HAMAP" id="MF_01337_B">
    <property type="entry name" value="Ribosomal_uL18_B"/>
    <property type="match status" value="1"/>
</dbReference>
<dbReference type="InterPro" id="IPR004389">
    <property type="entry name" value="Ribosomal_uL18_bac-type"/>
</dbReference>
<dbReference type="InterPro" id="IPR005484">
    <property type="entry name" value="Ribosomal_uL18_bac/euk"/>
</dbReference>
<dbReference type="NCBIfam" id="TIGR00060">
    <property type="entry name" value="L18_bact"/>
    <property type="match status" value="1"/>
</dbReference>
<dbReference type="PANTHER" id="PTHR12899">
    <property type="entry name" value="39S RIBOSOMAL PROTEIN L18, MITOCHONDRIAL"/>
    <property type="match status" value="1"/>
</dbReference>
<dbReference type="PANTHER" id="PTHR12899:SF3">
    <property type="entry name" value="LARGE RIBOSOMAL SUBUNIT PROTEIN UL18M"/>
    <property type="match status" value="1"/>
</dbReference>
<dbReference type="Pfam" id="PF00861">
    <property type="entry name" value="Ribosomal_L18p"/>
    <property type="match status" value="1"/>
</dbReference>
<dbReference type="SUPFAM" id="SSF53137">
    <property type="entry name" value="Translational machinery components"/>
    <property type="match status" value="1"/>
</dbReference>
<name>RL18_BACCZ</name>
<evidence type="ECO:0000255" key="1">
    <source>
        <dbReference type="HAMAP-Rule" id="MF_01337"/>
    </source>
</evidence>
<evidence type="ECO:0000305" key="2"/>
<keyword id="KW-0687">Ribonucleoprotein</keyword>
<keyword id="KW-0689">Ribosomal protein</keyword>
<keyword id="KW-0694">RNA-binding</keyword>
<keyword id="KW-0699">rRNA-binding</keyword>
<protein>
    <recommendedName>
        <fullName evidence="1">Large ribosomal subunit protein uL18</fullName>
    </recommendedName>
    <alternativeName>
        <fullName evidence="2">50S ribosomal protein L18</fullName>
    </alternativeName>
</protein>
<accession>Q63H74</accession>
<gene>
    <name evidence="1" type="primary">rplR</name>
    <name type="ordered locus">BCE33L0120</name>
</gene>
<organism>
    <name type="scientific">Bacillus cereus (strain ZK / E33L)</name>
    <dbReference type="NCBI Taxonomy" id="288681"/>
    <lineage>
        <taxon>Bacteria</taxon>
        <taxon>Bacillati</taxon>
        <taxon>Bacillota</taxon>
        <taxon>Bacilli</taxon>
        <taxon>Bacillales</taxon>
        <taxon>Bacillaceae</taxon>
        <taxon>Bacillus</taxon>
        <taxon>Bacillus cereus group</taxon>
    </lineage>
</organism>